<proteinExistence type="evidence at protein level"/>
<gene>
    <name type="primary">hisZ</name>
    <name type="ordered locus">LL1207</name>
    <name type="ORF">L0341</name>
</gene>
<evidence type="ECO:0000305" key="1"/>
<evidence type="ECO:0000305" key="2">
    <source>
    </source>
</evidence>
<evidence type="ECO:0007829" key="3">
    <source>
        <dbReference type="PDB" id="1Z7M"/>
    </source>
</evidence>
<evidence type="ECO:0007829" key="4">
    <source>
        <dbReference type="PDB" id="1Z7N"/>
    </source>
</evidence>
<sequence length="328" mass="37943">MEKINYLLPEESAEMTLNQVKSLRQIEGRLRKLFSLKNYQEVMPPSFEYTQLYTALESNGKTFNQEKMFQFIKHEGQSITLRYDFTLPLVRLYSQIKDSTSARYSYFGKIFRKEKRHKGRSTENYQIGIELFGESADKSELEILSLALQVIEQLGLNKTVFEIGSAKFFQRLCQLADGSTELLTELLLKKDLSGLNAFIEKNNFSKELRGLLKEIFITNELSRLENLVTNTKDDVLISSFDQLKEFSEKLSMIKPIIIDLGMVPKMDYYTDLMFKAYSSAANQPILSGGRYDQLLSNFQEEAFAIGFCCHMDTILKALERQELEEDND</sequence>
<reference key="1">
    <citation type="journal article" date="1992" name="J. Bacteriol.">
        <title>Histidine biosynthesis genes in Lactococcus lactis subsp. lactis.</title>
        <authorList>
            <person name="Delorme C."/>
            <person name="Ehrlich S.D."/>
            <person name="Renault P."/>
        </authorList>
    </citation>
    <scope>NUCLEOTIDE SEQUENCE [GENOMIC DNA]</scope>
    <source>
        <strain>NCDO 2118</strain>
    </source>
</reference>
<reference key="2">
    <citation type="journal article" date="2001" name="Genome Res.">
        <title>The complete genome sequence of the lactic acid bacterium Lactococcus lactis ssp. lactis IL1403.</title>
        <authorList>
            <person name="Bolotin A."/>
            <person name="Wincker P."/>
            <person name="Mauger S."/>
            <person name="Jaillon O."/>
            <person name="Malarme K."/>
            <person name="Weissenbach J."/>
            <person name="Ehrlich S.D."/>
            <person name="Sorokin A."/>
        </authorList>
    </citation>
    <scope>NUCLEOTIDE SEQUENCE [LARGE SCALE GENOMIC DNA]</scope>
    <source>
        <strain>IL1403</strain>
    </source>
</reference>
<reference key="3">
    <citation type="journal article" date="1999" name="Proc. Natl. Acad. Sci. U.S.A.">
        <title>An aminoacyl-tRNA synthetase paralog with a catalytic role in histidine biosynthesis.</title>
        <authorList>
            <person name="Sissler M."/>
            <person name="Delorme C."/>
            <person name="Bond J."/>
            <person name="Ehrlich S.D."/>
            <person name="Renault P."/>
            <person name="Francklyn C."/>
        </authorList>
    </citation>
    <scope>CHARACTERIZATION</scope>
</reference>
<reference key="4">
    <citation type="journal article" date="2002" name="Biochemistry">
        <title>The quaternary structure of the HisZ-HisG N-1-(5'-phosphoribosyl)-ATP transferase from Lactococcus lactis.</title>
        <authorList>
            <person name="Bovee M.L."/>
            <person name="Champagne K.S."/>
            <person name="Demeler B."/>
            <person name="Francklyn C.S."/>
        </authorList>
    </citation>
    <scope>SUBUNIT</scope>
</reference>
<name>HISZ_LACLA</name>
<comment type="function">
    <text>Required for the first step of histidine biosynthesis. May allow the feedback regulation of ATP phosphoribosyltransferase activity by histidine.</text>
</comment>
<comment type="pathway">
    <text>Amino-acid biosynthesis; L-histidine biosynthesis; L-histidine from 5-phospho-alpha-D-ribose 1-diphosphate: step 1/9.</text>
</comment>
<comment type="subunit">
    <text evidence="2">Heterooctamer composed of four HisG and four HisZ subunits.</text>
</comment>
<comment type="subcellular location">
    <subcellularLocation>
        <location evidence="1">Cytoplasm</location>
    </subcellularLocation>
</comment>
<comment type="miscellaneous">
    <text>This function is generally fulfilled by the C-terminal part of HisG, which is missing in some bacteria such as this one.</text>
</comment>
<comment type="miscellaneous">
    <text>The stability and homogeneity of the HisG-HisZ complex is apparently increased by ATP and 5-phosphoribose 1-diphosphate but decreased in the presence of the regulatory inhibitor histidine.</text>
</comment>
<comment type="similarity">
    <text evidence="1">Belongs to the class-II aminoacyl-tRNA synthetase family. HisZ subfamily.</text>
</comment>
<comment type="sequence caution" evidence="1">
    <conflict type="frameshift">
        <sequence resource="EMBL-CDS" id="AAK05305"/>
    </conflict>
</comment>
<keyword id="KW-0002">3D-structure</keyword>
<keyword id="KW-0028">Amino-acid biosynthesis</keyword>
<keyword id="KW-0963">Cytoplasm</keyword>
<keyword id="KW-0368">Histidine biosynthesis</keyword>
<keyword id="KW-1185">Reference proteome</keyword>
<accession>Q02147</accession>
<accession>Q9CG95</accession>
<organism>
    <name type="scientific">Lactococcus lactis subsp. lactis (strain IL1403)</name>
    <name type="common">Streptococcus lactis</name>
    <dbReference type="NCBI Taxonomy" id="272623"/>
    <lineage>
        <taxon>Bacteria</taxon>
        <taxon>Bacillati</taxon>
        <taxon>Bacillota</taxon>
        <taxon>Bacilli</taxon>
        <taxon>Lactobacillales</taxon>
        <taxon>Streptococcaceae</taxon>
        <taxon>Lactococcus</taxon>
    </lineage>
</organism>
<dbReference type="EMBL" id="U92974">
    <property type="protein sequence ID" value="AAB81902.1"/>
    <property type="molecule type" value="Genomic_DNA"/>
</dbReference>
<dbReference type="EMBL" id="AE005176">
    <property type="protein sequence ID" value="AAK05305.1"/>
    <property type="status" value="ALT_FRAME"/>
    <property type="molecule type" value="Genomic_DNA"/>
</dbReference>
<dbReference type="PIR" id="C45734">
    <property type="entry name" value="C45734"/>
</dbReference>
<dbReference type="PIR" id="G86775">
    <property type="entry name" value="G86775"/>
</dbReference>
<dbReference type="RefSeq" id="NP_267363.1">
    <property type="nucleotide sequence ID" value="NC_002662.1"/>
</dbReference>
<dbReference type="PDB" id="1Z7M">
    <property type="method" value="X-ray"/>
    <property type="resolution" value="2.90 A"/>
    <property type="chains" value="A/B/C/D=1-328"/>
</dbReference>
<dbReference type="PDB" id="1Z7N">
    <property type="method" value="X-ray"/>
    <property type="resolution" value="3.25 A"/>
    <property type="chains" value="A/B/C/D=1-328"/>
</dbReference>
<dbReference type="PDBsum" id="1Z7M"/>
<dbReference type="PDBsum" id="1Z7N"/>
<dbReference type="SMR" id="Q02147"/>
<dbReference type="PaxDb" id="272623-L0341"/>
<dbReference type="EnsemblBacteria" id="AAK05305">
    <property type="protein sequence ID" value="AAK05305"/>
    <property type="gene ID" value="L0341"/>
</dbReference>
<dbReference type="KEGG" id="lla:L0341"/>
<dbReference type="PATRIC" id="fig|272623.7.peg.1302"/>
<dbReference type="eggNOG" id="COG3705">
    <property type="taxonomic scope" value="Bacteria"/>
</dbReference>
<dbReference type="HOGENOM" id="CLU_025113_0_0_9"/>
<dbReference type="OrthoDB" id="9800814at2"/>
<dbReference type="UniPathway" id="UPA00031">
    <property type="reaction ID" value="UER00006"/>
</dbReference>
<dbReference type="EvolutionaryTrace" id="Q02147"/>
<dbReference type="Proteomes" id="UP000002196">
    <property type="component" value="Chromosome"/>
</dbReference>
<dbReference type="GO" id="GO:0005737">
    <property type="term" value="C:cytoplasm"/>
    <property type="evidence" value="ECO:0007669"/>
    <property type="project" value="UniProtKB-SubCell"/>
</dbReference>
<dbReference type="GO" id="GO:0140096">
    <property type="term" value="F:catalytic activity, acting on a protein"/>
    <property type="evidence" value="ECO:0007669"/>
    <property type="project" value="UniProtKB-ARBA"/>
</dbReference>
<dbReference type="GO" id="GO:0004821">
    <property type="term" value="F:histidine-tRNA ligase activity"/>
    <property type="evidence" value="ECO:0007669"/>
    <property type="project" value="TreeGrafter"/>
</dbReference>
<dbReference type="GO" id="GO:0016740">
    <property type="term" value="F:transferase activity"/>
    <property type="evidence" value="ECO:0007669"/>
    <property type="project" value="UniProtKB-ARBA"/>
</dbReference>
<dbReference type="GO" id="GO:0006427">
    <property type="term" value="P:histidyl-tRNA aminoacylation"/>
    <property type="evidence" value="ECO:0007669"/>
    <property type="project" value="TreeGrafter"/>
</dbReference>
<dbReference type="GO" id="GO:0000105">
    <property type="term" value="P:L-histidine biosynthetic process"/>
    <property type="evidence" value="ECO:0007669"/>
    <property type="project" value="UniProtKB-UniRule"/>
</dbReference>
<dbReference type="CDD" id="cd00773">
    <property type="entry name" value="HisRS-like_core"/>
    <property type="match status" value="1"/>
</dbReference>
<dbReference type="Gene3D" id="3.30.930.10">
    <property type="entry name" value="Bira Bifunctional Protein, Domain 2"/>
    <property type="match status" value="1"/>
</dbReference>
<dbReference type="HAMAP" id="MF_00125">
    <property type="entry name" value="HisZ"/>
    <property type="match status" value="1"/>
</dbReference>
<dbReference type="InterPro" id="IPR006195">
    <property type="entry name" value="aa-tRNA-synth_II"/>
</dbReference>
<dbReference type="InterPro" id="IPR045864">
    <property type="entry name" value="aa-tRNA-synth_II/BPL/LPL"/>
</dbReference>
<dbReference type="InterPro" id="IPR041715">
    <property type="entry name" value="HisRS-like_core"/>
</dbReference>
<dbReference type="InterPro" id="IPR004516">
    <property type="entry name" value="HisRS/HisZ"/>
</dbReference>
<dbReference type="InterPro" id="IPR004517">
    <property type="entry name" value="HisZ"/>
</dbReference>
<dbReference type="PANTHER" id="PTHR43707:SF6">
    <property type="entry name" value="ATP PHOSPHORIBOSYLTRANSFERASE REGULATORY SUBUNIT"/>
    <property type="match status" value="1"/>
</dbReference>
<dbReference type="PANTHER" id="PTHR43707">
    <property type="entry name" value="HISTIDYL-TRNA SYNTHETASE"/>
    <property type="match status" value="1"/>
</dbReference>
<dbReference type="Pfam" id="PF13393">
    <property type="entry name" value="tRNA-synt_His"/>
    <property type="match status" value="1"/>
</dbReference>
<dbReference type="PIRSF" id="PIRSF001549">
    <property type="entry name" value="His-tRNA_synth"/>
    <property type="match status" value="1"/>
</dbReference>
<dbReference type="SUPFAM" id="SSF55681">
    <property type="entry name" value="Class II aaRS and biotin synthetases"/>
    <property type="match status" value="1"/>
</dbReference>
<dbReference type="PROSITE" id="PS50862">
    <property type="entry name" value="AA_TRNA_LIGASE_II"/>
    <property type="match status" value="1"/>
</dbReference>
<protein>
    <recommendedName>
        <fullName>ATP phosphoribosyltransferase regulatory subunit</fullName>
    </recommendedName>
</protein>
<feature type="chain" id="PRO_0000171038" description="ATP phosphoribosyltransferase regulatory subunit">
    <location>
        <begin position="1"/>
        <end position="328"/>
    </location>
</feature>
<feature type="sequence conflict" description="In Ref. 1; AAB81902." evidence="1" ref="1">
    <original>K</original>
    <variation>N</variation>
    <location>
        <position position="73"/>
    </location>
</feature>
<feature type="sequence conflict" description="In Ref. 1; AAB81902." evidence="1" ref="1">
    <original>Q</original>
    <variation>H</variation>
    <location>
        <position position="174"/>
    </location>
</feature>
<feature type="sequence conflict" description="In Ref. 1; AAB81902." evidence="1" ref="1">
    <original>G</original>
    <variation>E</variation>
    <location>
        <position position="210"/>
    </location>
</feature>
<feature type="sequence conflict" description="In Ref. 1; AAB81902." evidence="1" ref="1">
    <original>F</original>
    <variation>V</variation>
    <location>
        <position position="303"/>
    </location>
</feature>
<feature type="strand" evidence="4">
    <location>
        <begin position="10"/>
        <end position="12"/>
    </location>
</feature>
<feature type="helix" evidence="3">
    <location>
        <begin position="17"/>
        <end position="36"/>
    </location>
</feature>
<feature type="strand" evidence="3">
    <location>
        <begin position="46"/>
        <end position="49"/>
    </location>
</feature>
<feature type="helix" evidence="3">
    <location>
        <begin position="50"/>
        <end position="57"/>
    </location>
</feature>
<feature type="strand" evidence="3">
    <location>
        <begin position="59"/>
        <end position="61"/>
    </location>
</feature>
<feature type="strand" evidence="3">
    <location>
        <begin position="70"/>
        <end position="72"/>
    </location>
</feature>
<feature type="strand" evidence="4">
    <location>
        <begin position="74"/>
        <end position="76"/>
    </location>
</feature>
<feature type="strand" evidence="3">
    <location>
        <begin position="78"/>
        <end position="81"/>
    </location>
</feature>
<feature type="helix" evidence="3">
    <location>
        <begin position="86"/>
        <end position="94"/>
    </location>
</feature>
<feature type="strand" evidence="3">
    <location>
        <begin position="102"/>
        <end position="109"/>
    </location>
</feature>
<feature type="strand" evidence="3">
    <location>
        <begin position="116"/>
        <end position="119"/>
    </location>
</feature>
<feature type="strand" evidence="3">
    <location>
        <begin position="125"/>
        <end position="134"/>
    </location>
</feature>
<feature type="helix" evidence="3">
    <location>
        <begin position="136"/>
        <end position="154"/>
    </location>
</feature>
<feature type="strand" evidence="3">
    <location>
        <begin position="157"/>
        <end position="165"/>
    </location>
</feature>
<feature type="helix" evidence="3">
    <location>
        <begin position="166"/>
        <end position="175"/>
    </location>
</feature>
<feature type="turn" evidence="3">
    <location>
        <begin position="176"/>
        <end position="178"/>
    </location>
</feature>
<feature type="helix" evidence="3">
    <location>
        <begin position="180"/>
        <end position="188"/>
    </location>
</feature>
<feature type="helix" evidence="3">
    <location>
        <begin position="192"/>
        <end position="199"/>
    </location>
</feature>
<feature type="helix" evidence="3">
    <location>
        <begin position="206"/>
        <end position="215"/>
    </location>
</feature>
<feature type="helix" evidence="3">
    <location>
        <begin position="221"/>
        <end position="230"/>
    </location>
</feature>
<feature type="helix" evidence="3">
    <location>
        <begin position="234"/>
        <end position="250"/>
    </location>
</feature>
<feature type="turn" evidence="3">
    <location>
        <begin position="251"/>
        <end position="253"/>
    </location>
</feature>
<feature type="strand" evidence="4">
    <location>
        <begin position="256"/>
        <end position="258"/>
    </location>
</feature>
<feature type="strand" evidence="3">
    <location>
        <begin position="271"/>
        <end position="278"/>
    </location>
</feature>
<feature type="strand" evidence="3">
    <location>
        <begin position="281"/>
        <end position="290"/>
    </location>
</feature>
<feature type="helix" evidence="3">
    <location>
        <begin position="292"/>
        <end position="296"/>
    </location>
</feature>
<feature type="strand" evidence="3">
    <location>
        <begin position="298"/>
        <end position="300"/>
    </location>
</feature>
<feature type="strand" evidence="3">
    <location>
        <begin position="305"/>
        <end position="310"/>
    </location>
</feature>
<feature type="helix" evidence="3">
    <location>
        <begin position="311"/>
        <end position="322"/>
    </location>
</feature>